<evidence type="ECO:0000255" key="1">
    <source>
        <dbReference type="HAMAP-Rule" id="MF_01012"/>
    </source>
</evidence>
<feature type="chain" id="PRO_1000084048" description="23S rRNA (uracil(747)-C(5))-methyltransferase RlmC">
    <location>
        <begin position="1"/>
        <end position="390"/>
    </location>
</feature>
<feature type="active site" description="Nucleophile" evidence="1">
    <location>
        <position position="349"/>
    </location>
</feature>
<feature type="binding site" evidence="1">
    <location>
        <position position="12"/>
    </location>
    <ligand>
        <name>[4Fe-4S] cluster</name>
        <dbReference type="ChEBI" id="CHEBI:49883"/>
    </ligand>
</feature>
<feature type="binding site" evidence="1">
    <location>
        <position position="20"/>
    </location>
    <ligand>
        <name>[4Fe-4S] cluster</name>
        <dbReference type="ChEBI" id="CHEBI:49883"/>
    </ligand>
</feature>
<feature type="binding site" evidence="1">
    <location>
        <position position="23"/>
    </location>
    <ligand>
        <name>[4Fe-4S] cluster</name>
        <dbReference type="ChEBI" id="CHEBI:49883"/>
    </ligand>
</feature>
<feature type="binding site" evidence="1">
    <location>
        <position position="100"/>
    </location>
    <ligand>
        <name>[4Fe-4S] cluster</name>
        <dbReference type="ChEBI" id="CHEBI:49883"/>
    </ligand>
</feature>
<feature type="binding site" evidence="1">
    <location>
        <position position="225"/>
    </location>
    <ligand>
        <name>S-adenosyl-L-methionine</name>
        <dbReference type="ChEBI" id="CHEBI:59789"/>
    </ligand>
</feature>
<feature type="binding site" evidence="1">
    <location>
        <position position="254"/>
    </location>
    <ligand>
        <name>S-adenosyl-L-methionine</name>
        <dbReference type="ChEBI" id="CHEBI:59789"/>
    </ligand>
</feature>
<feature type="binding site" evidence="1">
    <location>
        <position position="275"/>
    </location>
    <ligand>
        <name>S-adenosyl-L-methionine</name>
        <dbReference type="ChEBI" id="CHEBI:59789"/>
    </ligand>
</feature>
<feature type="binding site" evidence="1">
    <location>
        <position position="322"/>
    </location>
    <ligand>
        <name>S-adenosyl-L-methionine</name>
        <dbReference type="ChEBI" id="CHEBI:59789"/>
    </ligand>
</feature>
<comment type="function">
    <text evidence="1">Catalyzes the formation of 5-methyl-uridine at position 747 (m5U747) in 23S rRNA.</text>
</comment>
<comment type="catalytic activity">
    <reaction evidence="1">
        <text>uridine(747) in 23S rRNA + S-adenosyl-L-methionine = 5-methyluridine(747) in 23S rRNA + S-adenosyl-L-homocysteine + H(+)</text>
        <dbReference type="Rhea" id="RHEA:42628"/>
        <dbReference type="Rhea" id="RHEA-COMP:10154"/>
        <dbReference type="Rhea" id="RHEA-COMP:10155"/>
        <dbReference type="ChEBI" id="CHEBI:15378"/>
        <dbReference type="ChEBI" id="CHEBI:57856"/>
        <dbReference type="ChEBI" id="CHEBI:59789"/>
        <dbReference type="ChEBI" id="CHEBI:65315"/>
        <dbReference type="ChEBI" id="CHEBI:74447"/>
        <dbReference type="EC" id="2.1.1.189"/>
    </reaction>
</comment>
<comment type="similarity">
    <text evidence="1">Belongs to the class I-like SAM-binding methyltransferase superfamily. RNA M5U methyltransferase family. RlmC subfamily.</text>
</comment>
<sequence>MSAAIVNAVKQCGYFNQGQCLSCRHIQQPLAQQVAVKTQTLLQLLAPFIPANSAELFLPPITGDDSGFRNKAKMVVLGAAHEPVLGIVSPSGEAVDLCDCLLYPADMQALLHRLTRFVQQAGLPPYRVDKAKGELKFILLTRSQVRGEYLLRFVLRSHNGIERIERELPALLAEYPQIKVVSVNIQPVHMAILEGDEEIFLTENTRLEERFNHVPLFIRPKSFFQTNPQVAAQLYQTAREWVAEFSPRSLWDLFCGVGGFGLHCASKDITLTGIEIEAEAIACAQMSAQMMGLENVQFMALDSTDFAKGKSAADKPDLIIVNPPRRGIGEALCQSLSEFAPKAILYSSCNPKTLAKDLEHIQGYHLTKVQLFDLFPHTDHFEVLAMLVKD</sequence>
<keyword id="KW-0004">4Fe-4S</keyword>
<keyword id="KW-0408">Iron</keyword>
<keyword id="KW-0411">Iron-sulfur</keyword>
<keyword id="KW-0479">Metal-binding</keyword>
<keyword id="KW-0489">Methyltransferase</keyword>
<keyword id="KW-0698">rRNA processing</keyword>
<keyword id="KW-0949">S-adenosyl-L-methionine</keyword>
<keyword id="KW-0808">Transferase</keyword>
<protein>
    <recommendedName>
        <fullName evidence="1">23S rRNA (uracil(747)-C(5))-methyltransferase RlmC</fullName>
        <ecNumber evidence="1">2.1.1.189</ecNumber>
    </recommendedName>
    <alternativeName>
        <fullName evidence="1">23S rRNA(m5U747)-methyltransferase</fullName>
    </alternativeName>
</protein>
<name>RLMC_SHEB9</name>
<gene>
    <name evidence="1" type="primary">rlmC</name>
    <name type="synonym">rumB</name>
    <name type="ordered locus">Sbal195_3619</name>
</gene>
<proteinExistence type="inferred from homology"/>
<organism>
    <name type="scientific">Shewanella baltica (strain OS195)</name>
    <dbReference type="NCBI Taxonomy" id="399599"/>
    <lineage>
        <taxon>Bacteria</taxon>
        <taxon>Pseudomonadati</taxon>
        <taxon>Pseudomonadota</taxon>
        <taxon>Gammaproteobacteria</taxon>
        <taxon>Alteromonadales</taxon>
        <taxon>Shewanellaceae</taxon>
        <taxon>Shewanella</taxon>
    </lineage>
</organism>
<reference key="1">
    <citation type="submission" date="2007-11" db="EMBL/GenBank/DDBJ databases">
        <title>Complete sequence of chromosome of Shewanella baltica OS195.</title>
        <authorList>
            <consortium name="US DOE Joint Genome Institute"/>
            <person name="Copeland A."/>
            <person name="Lucas S."/>
            <person name="Lapidus A."/>
            <person name="Barry K."/>
            <person name="Glavina del Rio T."/>
            <person name="Dalin E."/>
            <person name="Tice H."/>
            <person name="Pitluck S."/>
            <person name="Chain P."/>
            <person name="Malfatti S."/>
            <person name="Shin M."/>
            <person name="Vergez L."/>
            <person name="Schmutz J."/>
            <person name="Larimer F."/>
            <person name="Land M."/>
            <person name="Hauser L."/>
            <person name="Kyrpides N."/>
            <person name="Kim E."/>
            <person name="Brettar I."/>
            <person name="Rodrigues J."/>
            <person name="Konstantinidis K."/>
            <person name="Klappenbach J."/>
            <person name="Hofle M."/>
            <person name="Tiedje J."/>
            <person name="Richardson P."/>
        </authorList>
    </citation>
    <scope>NUCLEOTIDE SEQUENCE [LARGE SCALE GENOMIC DNA]</scope>
    <source>
        <strain>OS195</strain>
    </source>
</reference>
<accession>A9L1I5</accession>
<dbReference type="EC" id="2.1.1.189" evidence="1"/>
<dbReference type="EMBL" id="CP000891">
    <property type="protein sequence ID" value="ABX50781.1"/>
    <property type="molecule type" value="Genomic_DNA"/>
</dbReference>
<dbReference type="RefSeq" id="WP_006083989.1">
    <property type="nucleotide sequence ID" value="NC_009997.1"/>
</dbReference>
<dbReference type="SMR" id="A9L1I5"/>
<dbReference type="GeneID" id="11773650"/>
<dbReference type="KEGG" id="sbn:Sbal195_3619"/>
<dbReference type="HOGENOM" id="CLU_014689_0_0_6"/>
<dbReference type="Proteomes" id="UP000000770">
    <property type="component" value="Chromosome"/>
</dbReference>
<dbReference type="GO" id="GO:0051539">
    <property type="term" value="F:4 iron, 4 sulfur cluster binding"/>
    <property type="evidence" value="ECO:0007669"/>
    <property type="project" value="UniProtKB-KW"/>
</dbReference>
<dbReference type="GO" id="GO:0005506">
    <property type="term" value="F:iron ion binding"/>
    <property type="evidence" value="ECO:0007669"/>
    <property type="project" value="UniProtKB-UniRule"/>
</dbReference>
<dbReference type="GO" id="GO:0070041">
    <property type="term" value="F:rRNA (uridine-C5-)-methyltransferase activity"/>
    <property type="evidence" value="ECO:0007669"/>
    <property type="project" value="UniProtKB-UniRule"/>
</dbReference>
<dbReference type="GO" id="GO:0070475">
    <property type="term" value="P:rRNA base methylation"/>
    <property type="evidence" value="ECO:0007669"/>
    <property type="project" value="TreeGrafter"/>
</dbReference>
<dbReference type="CDD" id="cd02440">
    <property type="entry name" value="AdoMet_MTases"/>
    <property type="match status" value="1"/>
</dbReference>
<dbReference type="Gene3D" id="2.40.50.1070">
    <property type="match status" value="1"/>
</dbReference>
<dbReference type="Gene3D" id="3.40.50.150">
    <property type="entry name" value="Vaccinia Virus protein VP39"/>
    <property type="match status" value="1"/>
</dbReference>
<dbReference type="HAMAP" id="MF_01012">
    <property type="entry name" value="23SrRNA_methyltr_RlmC"/>
    <property type="match status" value="1"/>
</dbReference>
<dbReference type="InterPro" id="IPR011825">
    <property type="entry name" value="23SrRNA_MeTrfase_RlmC"/>
</dbReference>
<dbReference type="InterPro" id="IPR030390">
    <property type="entry name" value="MeTrfase_TrmA_AS"/>
</dbReference>
<dbReference type="InterPro" id="IPR030391">
    <property type="entry name" value="MeTrfase_TrmA_CS"/>
</dbReference>
<dbReference type="InterPro" id="IPR029063">
    <property type="entry name" value="SAM-dependent_MTases_sf"/>
</dbReference>
<dbReference type="InterPro" id="IPR010280">
    <property type="entry name" value="U5_MeTrfase_fam"/>
</dbReference>
<dbReference type="NCBIfam" id="TIGR02085">
    <property type="entry name" value="meth_trns_rumB"/>
    <property type="match status" value="1"/>
</dbReference>
<dbReference type="NCBIfam" id="TIGR00479">
    <property type="entry name" value="rumA"/>
    <property type="match status" value="1"/>
</dbReference>
<dbReference type="PANTHER" id="PTHR11061">
    <property type="entry name" value="RNA M5U METHYLTRANSFERASE"/>
    <property type="match status" value="1"/>
</dbReference>
<dbReference type="PANTHER" id="PTHR11061:SF30">
    <property type="entry name" value="TRNA (URACIL(54)-C(5))-METHYLTRANSFERASE"/>
    <property type="match status" value="1"/>
</dbReference>
<dbReference type="Pfam" id="PF05958">
    <property type="entry name" value="tRNA_U5-meth_tr"/>
    <property type="match status" value="1"/>
</dbReference>
<dbReference type="SUPFAM" id="SSF53335">
    <property type="entry name" value="S-adenosyl-L-methionine-dependent methyltransferases"/>
    <property type="match status" value="1"/>
</dbReference>
<dbReference type="PROSITE" id="PS51687">
    <property type="entry name" value="SAM_MT_RNA_M5U"/>
    <property type="match status" value="1"/>
</dbReference>
<dbReference type="PROSITE" id="PS01230">
    <property type="entry name" value="TRMA_1"/>
    <property type="match status" value="1"/>
</dbReference>
<dbReference type="PROSITE" id="PS01231">
    <property type="entry name" value="TRMA_2"/>
    <property type="match status" value="1"/>
</dbReference>